<gene>
    <name evidence="1" type="primary">rpmI</name>
    <name evidence="1" type="synonym">rpl35</name>
    <name type="ordered locus">PMM1661</name>
</gene>
<protein>
    <recommendedName>
        <fullName evidence="1">Large ribosomal subunit protein bL35</fullName>
    </recommendedName>
    <alternativeName>
        <fullName evidence="2">50S ribosomal protein L35</fullName>
    </alternativeName>
</protein>
<sequence length="65" mass="7549">MSKLKTRKSAAKRFKATATGKFTRRRAFHNHLLDHKSSKLKRHLKTKAVVDERDADNVKLMIPYA</sequence>
<keyword id="KW-0687">Ribonucleoprotein</keyword>
<keyword id="KW-0689">Ribosomal protein</keyword>
<organism>
    <name type="scientific">Prochlorococcus marinus subsp. pastoris (strain CCMP1986 / NIES-2087 / MED4)</name>
    <dbReference type="NCBI Taxonomy" id="59919"/>
    <lineage>
        <taxon>Bacteria</taxon>
        <taxon>Bacillati</taxon>
        <taxon>Cyanobacteriota</taxon>
        <taxon>Cyanophyceae</taxon>
        <taxon>Synechococcales</taxon>
        <taxon>Prochlorococcaceae</taxon>
        <taxon>Prochlorococcus</taxon>
    </lineage>
</organism>
<name>RL35_PROMP</name>
<accession>Q7UZK2</accession>
<feature type="chain" id="PRO_0000177401" description="Large ribosomal subunit protein bL35">
    <location>
        <begin position="1"/>
        <end position="65"/>
    </location>
</feature>
<proteinExistence type="inferred from homology"/>
<evidence type="ECO:0000255" key="1">
    <source>
        <dbReference type="HAMAP-Rule" id="MF_00514"/>
    </source>
</evidence>
<evidence type="ECO:0000305" key="2"/>
<comment type="similarity">
    <text evidence="1">Belongs to the bacterial ribosomal protein bL35 family.</text>
</comment>
<reference key="1">
    <citation type="journal article" date="2003" name="Nature">
        <title>Genome divergence in two Prochlorococcus ecotypes reflects oceanic niche differentiation.</title>
        <authorList>
            <person name="Rocap G."/>
            <person name="Larimer F.W."/>
            <person name="Lamerdin J.E."/>
            <person name="Malfatti S."/>
            <person name="Chain P."/>
            <person name="Ahlgren N.A."/>
            <person name="Arellano A."/>
            <person name="Coleman M."/>
            <person name="Hauser L."/>
            <person name="Hess W.R."/>
            <person name="Johnson Z.I."/>
            <person name="Land M.L."/>
            <person name="Lindell D."/>
            <person name="Post A.F."/>
            <person name="Regala W."/>
            <person name="Shah M."/>
            <person name="Shaw S.L."/>
            <person name="Steglich C."/>
            <person name="Sullivan M.B."/>
            <person name="Ting C.S."/>
            <person name="Tolonen A."/>
            <person name="Webb E.A."/>
            <person name="Zinser E.R."/>
            <person name="Chisholm S.W."/>
        </authorList>
    </citation>
    <scope>NUCLEOTIDE SEQUENCE [LARGE SCALE GENOMIC DNA]</scope>
    <source>
        <strain>CCMP1986 / NIES-2087 / MED4</strain>
    </source>
</reference>
<dbReference type="EMBL" id="BX548174">
    <property type="protein sequence ID" value="CAE20120.1"/>
    <property type="molecule type" value="Genomic_DNA"/>
</dbReference>
<dbReference type="RefSeq" id="WP_011133288.1">
    <property type="nucleotide sequence ID" value="NC_005072.1"/>
</dbReference>
<dbReference type="SMR" id="Q7UZK2"/>
<dbReference type="STRING" id="59919.PMM1661"/>
<dbReference type="KEGG" id="pmm:PMM1661"/>
<dbReference type="eggNOG" id="COG0291">
    <property type="taxonomic scope" value="Bacteria"/>
</dbReference>
<dbReference type="HOGENOM" id="CLU_169643_4_0_3"/>
<dbReference type="OrthoDB" id="47476at2"/>
<dbReference type="Proteomes" id="UP000001026">
    <property type="component" value="Chromosome"/>
</dbReference>
<dbReference type="GO" id="GO:0022625">
    <property type="term" value="C:cytosolic large ribosomal subunit"/>
    <property type="evidence" value="ECO:0007669"/>
    <property type="project" value="TreeGrafter"/>
</dbReference>
<dbReference type="GO" id="GO:0003735">
    <property type="term" value="F:structural constituent of ribosome"/>
    <property type="evidence" value="ECO:0007669"/>
    <property type="project" value="InterPro"/>
</dbReference>
<dbReference type="GO" id="GO:0006412">
    <property type="term" value="P:translation"/>
    <property type="evidence" value="ECO:0007669"/>
    <property type="project" value="UniProtKB-UniRule"/>
</dbReference>
<dbReference type="FunFam" id="4.10.410.60:FF:000001">
    <property type="entry name" value="50S ribosomal protein L35"/>
    <property type="match status" value="1"/>
</dbReference>
<dbReference type="Gene3D" id="4.10.410.60">
    <property type="match status" value="1"/>
</dbReference>
<dbReference type="HAMAP" id="MF_00514">
    <property type="entry name" value="Ribosomal_bL35"/>
    <property type="match status" value="1"/>
</dbReference>
<dbReference type="InterPro" id="IPR001706">
    <property type="entry name" value="Ribosomal_bL35"/>
</dbReference>
<dbReference type="InterPro" id="IPR021137">
    <property type="entry name" value="Ribosomal_bL35-like"/>
</dbReference>
<dbReference type="InterPro" id="IPR018265">
    <property type="entry name" value="Ribosomal_bL35_CS"/>
</dbReference>
<dbReference type="InterPro" id="IPR037229">
    <property type="entry name" value="Ribosomal_bL35_sf"/>
</dbReference>
<dbReference type="NCBIfam" id="TIGR00001">
    <property type="entry name" value="rpmI_bact"/>
    <property type="match status" value="1"/>
</dbReference>
<dbReference type="PANTHER" id="PTHR33343">
    <property type="entry name" value="54S RIBOSOMAL PROTEIN BL35M"/>
    <property type="match status" value="1"/>
</dbReference>
<dbReference type="PANTHER" id="PTHR33343:SF1">
    <property type="entry name" value="LARGE RIBOSOMAL SUBUNIT PROTEIN BL35M"/>
    <property type="match status" value="1"/>
</dbReference>
<dbReference type="Pfam" id="PF01632">
    <property type="entry name" value="Ribosomal_L35p"/>
    <property type="match status" value="1"/>
</dbReference>
<dbReference type="PRINTS" id="PR00064">
    <property type="entry name" value="RIBOSOMALL35"/>
</dbReference>
<dbReference type="SUPFAM" id="SSF143034">
    <property type="entry name" value="L35p-like"/>
    <property type="match status" value="1"/>
</dbReference>
<dbReference type="PROSITE" id="PS00936">
    <property type="entry name" value="RIBOSOMAL_L35"/>
    <property type="match status" value="1"/>
</dbReference>